<proteinExistence type="inferred from homology"/>
<evidence type="ECO:0000255" key="1">
    <source>
        <dbReference type="HAMAP-Rule" id="MF_00300"/>
    </source>
</evidence>
<gene>
    <name evidence="1" type="primary">aroC</name>
    <name type="ordered locus">Ppha_0942</name>
</gene>
<feature type="chain" id="PRO_1000115379" description="Chorismate synthase">
    <location>
        <begin position="1"/>
        <end position="397"/>
    </location>
</feature>
<feature type="binding site" evidence="1">
    <location>
        <position position="40"/>
    </location>
    <ligand>
        <name>NADP(+)</name>
        <dbReference type="ChEBI" id="CHEBI:58349"/>
    </ligand>
</feature>
<feature type="binding site" evidence="1">
    <location>
        <position position="46"/>
    </location>
    <ligand>
        <name>NADP(+)</name>
        <dbReference type="ChEBI" id="CHEBI:58349"/>
    </ligand>
</feature>
<feature type="binding site" evidence="1">
    <location>
        <begin position="129"/>
        <end position="131"/>
    </location>
    <ligand>
        <name>FMN</name>
        <dbReference type="ChEBI" id="CHEBI:58210"/>
    </ligand>
</feature>
<feature type="binding site" evidence="1">
    <location>
        <begin position="257"/>
        <end position="258"/>
    </location>
    <ligand>
        <name>FMN</name>
        <dbReference type="ChEBI" id="CHEBI:58210"/>
    </ligand>
</feature>
<feature type="binding site" evidence="1">
    <location>
        <position position="302"/>
    </location>
    <ligand>
        <name>FMN</name>
        <dbReference type="ChEBI" id="CHEBI:58210"/>
    </ligand>
</feature>
<feature type="binding site" evidence="1">
    <location>
        <begin position="317"/>
        <end position="321"/>
    </location>
    <ligand>
        <name>FMN</name>
        <dbReference type="ChEBI" id="CHEBI:58210"/>
    </ligand>
</feature>
<feature type="binding site" evidence="1">
    <location>
        <position position="343"/>
    </location>
    <ligand>
        <name>FMN</name>
        <dbReference type="ChEBI" id="CHEBI:58210"/>
    </ligand>
</feature>
<sequence>MIRYFTAGESHGPALSAIVEGMPAGITITPKEINTQLARRQQGHGRGGRMKIESDKAEILSGVRFGKTIGSPITLVINNRDWQNWTTTMAQFEKPDEQCSKITIPRPGHADLAGRIKYGFDDIRPVIERSSARETAARVAAGTVARLFLKALGIEIGSYISAIGSAAEASPDKQLEGLLLEGAEAVARQADLSPVRMLGKETETNALAAIDGASERGDTLGGIIEIFITGVPPGFGSYVQHDRRLDAALAAAIISIQAIKGVEIGTAFENARKPGSEVHDEFHLSREKGVIRKTNRAGGLEGSMSSGQTIHLRAAMKPISSLVTPLLSFDVETLQATPSRFERSDTCAVPAAGVVAEAVLAPVIANALLEKLGGDHLDEIRQRLDLYRESIRSTFHS</sequence>
<name>AROC_PELPB</name>
<protein>
    <recommendedName>
        <fullName evidence="1">Chorismate synthase</fullName>
        <shortName evidence="1">CS</shortName>
        <ecNumber evidence="1">4.2.3.5</ecNumber>
    </recommendedName>
    <alternativeName>
        <fullName evidence="1">5-enolpyruvylshikimate-3-phosphate phospholyase</fullName>
    </alternativeName>
</protein>
<comment type="function">
    <text evidence="1">Catalyzes the anti-1,4-elimination of the C-3 phosphate and the C-6 proR hydrogen from 5-enolpyruvylshikimate-3-phosphate (EPSP) to yield chorismate, which is the branch point compound that serves as the starting substrate for the three terminal pathways of aromatic amino acid biosynthesis. This reaction introduces a second double bond into the aromatic ring system.</text>
</comment>
<comment type="catalytic activity">
    <reaction evidence="1">
        <text>5-O-(1-carboxyvinyl)-3-phosphoshikimate = chorismate + phosphate</text>
        <dbReference type="Rhea" id="RHEA:21020"/>
        <dbReference type="ChEBI" id="CHEBI:29748"/>
        <dbReference type="ChEBI" id="CHEBI:43474"/>
        <dbReference type="ChEBI" id="CHEBI:57701"/>
        <dbReference type="EC" id="4.2.3.5"/>
    </reaction>
</comment>
<comment type="cofactor">
    <cofactor evidence="1">
        <name>FMNH2</name>
        <dbReference type="ChEBI" id="CHEBI:57618"/>
    </cofactor>
    <text evidence="1">Reduced FMN (FMNH(2)).</text>
</comment>
<comment type="pathway">
    <text evidence="1">Metabolic intermediate biosynthesis; chorismate biosynthesis; chorismate from D-erythrose 4-phosphate and phosphoenolpyruvate: step 7/7.</text>
</comment>
<comment type="subunit">
    <text evidence="1">Homotetramer.</text>
</comment>
<comment type="similarity">
    <text evidence="1">Belongs to the chorismate synthase family.</text>
</comment>
<accession>B4SFH4</accession>
<keyword id="KW-0028">Amino-acid biosynthesis</keyword>
<keyword id="KW-0057">Aromatic amino acid biosynthesis</keyword>
<keyword id="KW-0274">FAD</keyword>
<keyword id="KW-0285">Flavoprotein</keyword>
<keyword id="KW-0288">FMN</keyword>
<keyword id="KW-0456">Lyase</keyword>
<keyword id="KW-0521">NADP</keyword>
<keyword id="KW-1185">Reference proteome</keyword>
<dbReference type="EC" id="4.2.3.5" evidence="1"/>
<dbReference type="EMBL" id="CP001110">
    <property type="protein sequence ID" value="ACF43229.1"/>
    <property type="molecule type" value="Genomic_DNA"/>
</dbReference>
<dbReference type="RefSeq" id="WP_012507724.1">
    <property type="nucleotide sequence ID" value="NC_011060.1"/>
</dbReference>
<dbReference type="SMR" id="B4SFH4"/>
<dbReference type="STRING" id="324925.Ppha_0942"/>
<dbReference type="KEGG" id="pph:Ppha_0942"/>
<dbReference type="eggNOG" id="COG0082">
    <property type="taxonomic scope" value="Bacteria"/>
</dbReference>
<dbReference type="HOGENOM" id="CLU_034547_2_0_10"/>
<dbReference type="OrthoDB" id="9771806at2"/>
<dbReference type="UniPathway" id="UPA00053">
    <property type="reaction ID" value="UER00090"/>
</dbReference>
<dbReference type="Proteomes" id="UP000002724">
    <property type="component" value="Chromosome"/>
</dbReference>
<dbReference type="GO" id="GO:0005829">
    <property type="term" value="C:cytosol"/>
    <property type="evidence" value="ECO:0007669"/>
    <property type="project" value="TreeGrafter"/>
</dbReference>
<dbReference type="GO" id="GO:0004107">
    <property type="term" value="F:chorismate synthase activity"/>
    <property type="evidence" value="ECO:0007669"/>
    <property type="project" value="UniProtKB-UniRule"/>
</dbReference>
<dbReference type="GO" id="GO:0010181">
    <property type="term" value="F:FMN binding"/>
    <property type="evidence" value="ECO:0007669"/>
    <property type="project" value="TreeGrafter"/>
</dbReference>
<dbReference type="GO" id="GO:0008652">
    <property type="term" value="P:amino acid biosynthetic process"/>
    <property type="evidence" value="ECO:0007669"/>
    <property type="project" value="UniProtKB-KW"/>
</dbReference>
<dbReference type="GO" id="GO:0009073">
    <property type="term" value="P:aromatic amino acid family biosynthetic process"/>
    <property type="evidence" value="ECO:0007669"/>
    <property type="project" value="UniProtKB-KW"/>
</dbReference>
<dbReference type="GO" id="GO:0009423">
    <property type="term" value="P:chorismate biosynthetic process"/>
    <property type="evidence" value="ECO:0007669"/>
    <property type="project" value="UniProtKB-UniRule"/>
</dbReference>
<dbReference type="CDD" id="cd07304">
    <property type="entry name" value="Chorismate_synthase"/>
    <property type="match status" value="1"/>
</dbReference>
<dbReference type="FunFam" id="3.60.150.10:FF:000002">
    <property type="entry name" value="Chorismate synthase"/>
    <property type="match status" value="1"/>
</dbReference>
<dbReference type="Gene3D" id="3.60.150.10">
    <property type="entry name" value="Chorismate synthase AroC"/>
    <property type="match status" value="1"/>
</dbReference>
<dbReference type="HAMAP" id="MF_00300">
    <property type="entry name" value="Chorismate_synth"/>
    <property type="match status" value="1"/>
</dbReference>
<dbReference type="InterPro" id="IPR000453">
    <property type="entry name" value="Chorismate_synth"/>
</dbReference>
<dbReference type="InterPro" id="IPR035904">
    <property type="entry name" value="Chorismate_synth_AroC_sf"/>
</dbReference>
<dbReference type="InterPro" id="IPR020541">
    <property type="entry name" value="Chorismate_synthase_CS"/>
</dbReference>
<dbReference type="NCBIfam" id="TIGR00033">
    <property type="entry name" value="aroC"/>
    <property type="match status" value="1"/>
</dbReference>
<dbReference type="NCBIfam" id="NF003793">
    <property type="entry name" value="PRK05382.1"/>
    <property type="match status" value="1"/>
</dbReference>
<dbReference type="PANTHER" id="PTHR21085">
    <property type="entry name" value="CHORISMATE SYNTHASE"/>
    <property type="match status" value="1"/>
</dbReference>
<dbReference type="PANTHER" id="PTHR21085:SF0">
    <property type="entry name" value="CHORISMATE SYNTHASE"/>
    <property type="match status" value="1"/>
</dbReference>
<dbReference type="Pfam" id="PF01264">
    <property type="entry name" value="Chorismate_synt"/>
    <property type="match status" value="1"/>
</dbReference>
<dbReference type="PIRSF" id="PIRSF001456">
    <property type="entry name" value="Chorismate_synth"/>
    <property type="match status" value="1"/>
</dbReference>
<dbReference type="SUPFAM" id="SSF103263">
    <property type="entry name" value="Chorismate synthase, AroC"/>
    <property type="match status" value="1"/>
</dbReference>
<dbReference type="PROSITE" id="PS00787">
    <property type="entry name" value="CHORISMATE_SYNTHASE_1"/>
    <property type="match status" value="1"/>
</dbReference>
<dbReference type="PROSITE" id="PS00788">
    <property type="entry name" value="CHORISMATE_SYNTHASE_2"/>
    <property type="match status" value="1"/>
</dbReference>
<reference key="1">
    <citation type="submission" date="2008-06" db="EMBL/GenBank/DDBJ databases">
        <title>Complete sequence of Pelodictyon phaeoclathratiforme BU-1.</title>
        <authorList>
            <consortium name="US DOE Joint Genome Institute"/>
            <person name="Lucas S."/>
            <person name="Copeland A."/>
            <person name="Lapidus A."/>
            <person name="Glavina del Rio T."/>
            <person name="Dalin E."/>
            <person name="Tice H."/>
            <person name="Bruce D."/>
            <person name="Goodwin L."/>
            <person name="Pitluck S."/>
            <person name="Schmutz J."/>
            <person name="Larimer F."/>
            <person name="Land M."/>
            <person name="Hauser L."/>
            <person name="Kyrpides N."/>
            <person name="Mikhailova N."/>
            <person name="Liu Z."/>
            <person name="Li T."/>
            <person name="Zhao F."/>
            <person name="Overmann J."/>
            <person name="Bryant D.A."/>
            <person name="Richardson P."/>
        </authorList>
    </citation>
    <scope>NUCLEOTIDE SEQUENCE [LARGE SCALE GENOMIC DNA]</scope>
    <source>
        <strain>DSM 5477 / BU-1</strain>
    </source>
</reference>
<organism>
    <name type="scientific">Pelodictyon phaeoclathratiforme (strain DSM 5477 / BU-1)</name>
    <dbReference type="NCBI Taxonomy" id="324925"/>
    <lineage>
        <taxon>Bacteria</taxon>
        <taxon>Pseudomonadati</taxon>
        <taxon>Chlorobiota</taxon>
        <taxon>Chlorobiia</taxon>
        <taxon>Chlorobiales</taxon>
        <taxon>Chlorobiaceae</taxon>
        <taxon>Chlorobium/Pelodictyon group</taxon>
        <taxon>Pelodictyon</taxon>
    </lineage>
</organism>